<comment type="function">
    <text evidence="1">Usually encoded in the trnK tRNA gene intron. Probably assists in splicing its own and other chloroplast group II introns.</text>
</comment>
<comment type="subcellular location">
    <subcellularLocation>
        <location>Plastid</location>
        <location>Chloroplast</location>
    </subcellularLocation>
</comment>
<comment type="similarity">
    <text evidence="1">Belongs to the intron maturase 2 family. MatK subfamily.</text>
</comment>
<evidence type="ECO:0000255" key="1">
    <source>
        <dbReference type="HAMAP-Rule" id="MF_01390"/>
    </source>
</evidence>
<geneLocation type="chloroplast"/>
<reference key="1">
    <citation type="submission" date="2000-02" db="EMBL/GenBank/DDBJ databases">
        <title>Phylogenetic relationships of the aquatic angiosperm family Podostemaceae inferred from matK sequence data.</title>
        <authorList>
            <person name="Kita Y."/>
            <person name="Kato M."/>
        </authorList>
    </citation>
    <scope>NUCLEOTIDE SEQUENCE [GENOMIC DNA]</scope>
</reference>
<dbReference type="EMBL" id="AB038174">
    <property type="protein sequence ID" value="BAB83135.1"/>
    <property type="molecule type" value="Genomic_DNA"/>
</dbReference>
<dbReference type="RefSeq" id="YP_009379318.1">
    <property type="nucleotide sequence ID" value="NC_034932.1"/>
</dbReference>
<dbReference type="GeneID" id="32957743"/>
<dbReference type="GO" id="GO:0009507">
    <property type="term" value="C:chloroplast"/>
    <property type="evidence" value="ECO:0007669"/>
    <property type="project" value="UniProtKB-SubCell"/>
</dbReference>
<dbReference type="GO" id="GO:0003723">
    <property type="term" value="F:RNA binding"/>
    <property type="evidence" value="ECO:0007669"/>
    <property type="project" value="UniProtKB-KW"/>
</dbReference>
<dbReference type="GO" id="GO:0006397">
    <property type="term" value="P:mRNA processing"/>
    <property type="evidence" value="ECO:0007669"/>
    <property type="project" value="UniProtKB-KW"/>
</dbReference>
<dbReference type="GO" id="GO:0008380">
    <property type="term" value="P:RNA splicing"/>
    <property type="evidence" value="ECO:0007669"/>
    <property type="project" value="UniProtKB-UniRule"/>
</dbReference>
<dbReference type="GO" id="GO:0008033">
    <property type="term" value="P:tRNA processing"/>
    <property type="evidence" value="ECO:0007669"/>
    <property type="project" value="UniProtKB-KW"/>
</dbReference>
<dbReference type="HAMAP" id="MF_01390">
    <property type="entry name" value="MatK"/>
    <property type="match status" value="1"/>
</dbReference>
<dbReference type="InterPro" id="IPR024937">
    <property type="entry name" value="Domain_X"/>
</dbReference>
<dbReference type="InterPro" id="IPR002866">
    <property type="entry name" value="Maturase_MatK"/>
</dbReference>
<dbReference type="InterPro" id="IPR024942">
    <property type="entry name" value="Maturase_MatK_N"/>
</dbReference>
<dbReference type="PANTHER" id="PTHR34811">
    <property type="entry name" value="MATURASE K"/>
    <property type="match status" value="1"/>
</dbReference>
<dbReference type="PANTHER" id="PTHR34811:SF1">
    <property type="entry name" value="MATURASE K"/>
    <property type="match status" value="1"/>
</dbReference>
<dbReference type="Pfam" id="PF01348">
    <property type="entry name" value="Intron_maturas2"/>
    <property type="match status" value="1"/>
</dbReference>
<dbReference type="Pfam" id="PF01824">
    <property type="entry name" value="MatK_N"/>
    <property type="match status" value="1"/>
</dbReference>
<proteinExistence type="inferred from homology"/>
<gene>
    <name evidence="1" type="primary">matK</name>
</gene>
<accession>Q8WKN0</accession>
<sequence>MKEYQIHLELDRSQQHNFLYPLLFREYIYTLAHDHGLNRSTIPLENGGYDNKSSSLSVKRLISRTYQRIHLSIYAKDSNPNQFIGHNNQFYSQMISEGFSVIVEIPFSLRLVAFLEGKEKEMAKSHNFQSIHSIFPFFENNFSHLHYVLDVLIPYPIRPEILVRAFRYWVKDASSLHLLRFFLHEYFNWNSLITPKKSNSIFSTSNPRFFLFLYNSHVYEYESIFFFLRNQSSHLRSTSSGLLFERISFYGKVEDLVQVFVNDFQDNLWLFKHPIMHYVRYQGKSVLASKDMPLLMNKWKYYLVNLWQWHFHVWSQPGRIHINHLYKDYINFLGYLSRGRLNTLVVRSQMLENAFLIDNAMKQFETTVPIIPLIGSLTMARFCNSLGHPISKPTWADSSDSYIIDRFMRICRKLSHYHSGSSKKKSLYRIKYILRVSCVKSLVRKHKSTVRVFLKRLGSEFLEEFFTEEEHVLSLIFPRALFTSRRLYRGRVWYLDIICINDFVNHDKFEIVPN</sequence>
<keyword id="KW-0150">Chloroplast</keyword>
<keyword id="KW-0507">mRNA processing</keyword>
<keyword id="KW-0934">Plastid</keyword>
<keyword id="KW-0694">RNA-binding</keyword>
<keyword id="KW-0819">tRNA processing</keyword>
<name>MATK_ACEPM</name>
<organism>
    <name type="scientific">Acer palmatum</name>
    <name type="common">Japanese maple</name>
    <dbReference type="NCBI Taxonomy" id="66201"/>
    <lineage>
        <taxon>Eukaryota</taxon>
        <taxon>Viridiplantae</taxon>
        <taxon>Streptophyta</taxon>
        <taxon>Embryophyta</taxon>
        <taxon>Tracheophyta</taxon>
        <taxon>Spermatophyta</taxon>
        <taxon>Magnoliopsida</taxon>
        <taxon>eudicotyledons</taxon>
        <taxon>Gunneridae</taxon>
        <taxon>Pentapetalae</taxon>
        <taxon>rosids</taxon>
        <taxon>malvids</taxon>
        <taxon>Sapindales</taxon>
        <taxon>Sapindaceae</taxon>
        <taxon>Hippocastanoideae</taxon>
        <taxon>Acereae</taxon>
        <taxon>Acer</taxon>
    </lineage>
</organism>
<protein>
    <recommendedName>
        <fullName evidence="1">Maturase K</fullName>
    </recommendedName>
    <alternativeName>
        <fullName evidence="1">Intron maturase</fullName>
    </alternativeName>
</protein>
<feature type="chain" id="PRO_0000143202" description="Maturase K">
    <location>
        <begin position="1"/>
        <end position="514"/>
    </location>
</feature>